<sequence length="143" mass="14955">MSRNRLFLVAGSLAVAAAVSLISGITLLNRDVGSYIASHYRQESRDVNGTRYLCTGSPKQVATTLVKYQTPAARASHTDTEYLRYRNNIVTVGPDGTYPCIIRVENLSAGYNHGAYVFLGPGFTPGSPSGGSGGSPGGPGGSK</sequence>
<name>Y2599_MYCTU</name>
<feature type="signal peptide" evidence="1">
    <location>
        <begin position="1"/>
        <end position="16"/>
    </location>
</feature>
<feature type="chain" id="PRO_0000014143" description="Uncharacterized protein Rv2599">
    <location>
        <begin position="17"/>
        <end position="143"/>
    </location>
</feature>
<feature type="transmembrane region" description="Helical" evidence="1">
    <location>
        <begin position="114"/>
        <end position="134"/>
    </location>
</feature>
<comment type="subcellular location">
    <subcellularLocation>
        <location evidence="2">Membrane</location>
        <topology evidence="2">Single-pass membrane protein</topology>
    </subcellularLocation>
</comment>
<gene>
    <name type="ordered locus">Rv2599</name>
    <name type="ORF">MTCY227.02c</name>
</gene>
<proteinExistence type="evidence at protein level"/>
<organism>
    <name type="scientific">Mycobacterium tuberculosis (strain ATCC 25618 / H37Rv)</name>
    <dbReference type="NCBI Taxonomy" id="83332"/>
    <lineage>
        <taxon>Bacteria</taxon>
        <taxon>Bacillati</taxon>
        <taxon>Actinomycetota</taxon>
        <taxon>Actinomycetes</taxon>
        <taxon>Mycobacteriales</taxon>
        <taxon>Mycobacteriaceae</taxon>
        <taxon>Mycobacterium</taxon>
        <taxon>Mycobacterium tuberculosis complex</taxon>
    </lineage>
</organism>
<keyword id="KW-0472">Membrane</keyword>
<keyword id="KW-1185">Reference proteome</keyword>
<keyword id="KW-0732">Signal</keyword>
<keyword id="KW-0812">Transmembrane</keyword>
<keyword id="KW-1133">Transmembrane helix</keyword>
<dbReference type="EMBL" id="AL123456">
    <property type="protein sequence ID" value="CCP45395.1"/>
    <property type="molecule type" value="Genomic_DNA"/>
</dbReference>
<dbReference type="PIR" id="F70727">
    <property type="entry name" value="F70727"/>
</dbReference>
<dbReference type="RefSeq" id="NP_217115.1">
    <property type="nucleotide sequence ID" value="NC_000962.3"/>
</dbReference>
<dbReference type="RefSeq" id="WP_003899390.1">
    <property type="nucleotide sequence ID" value="NZ_NVQJ01000023.1"/>
</dbReference>
<dbReference type="SMR" id="P9WL69"/>
<dbReference type="STRING" id="83332.Rv2599"/>
<dbReference type="PaxDb" id="83332-Rv2599"/>
<dbReference type="DNASU" id="887832"/>
<dbReference type="GeneID" id="887832"/>
<dbReference type="KEGG" id="mtu:Rv2599"/>
<dbReference type="KEGG" id="mtv:RVBD_2599"/>
<dbReference type="TubercuList" id="Rv2599"/>
<dbReference type="eggNOG" id="ENOG5032994">
    <property type="taxonomic scope" value="Bacteria"/>
</dbReference>
<dbReference type="InParanoid" id="P9WL69"/>
<dbReference type="OrthoDB" id="3783200at2"/>
<dbReference type="Proteomes" id="UP000001584">
    <property type="component" value="Chromosome"/>
</dbReference>
<dbReference type="GO" id="GO:0005576">
    <property type="term" value="C:extracellular region"/>
    <property type="evidence" value="ECO:0007005"/>
    <property type="project" value="MTBBASE"/>
</dbReference>
<dbReference type="GO" id="GO:0016020">
    <property type="term" value="C:membrane"/>
    <property type="evidence" value="ECO:0007669"/>
    <property type="project" value="UniProtKB-SubCell"/>
</dbReference>
<dbReference type="InterPro" id="IPR025341">
    <property type="entry name" value="DUF4247"/>
</dbReference>
<dbReference type="Pfam" id="PF14042">
    <property type="entry name" value="DUF4247"/>
    <property type="match status" value="1"/>
</dbReference>
<protein>
    <recommendedName>
        <fullName>Uncharacterized protein Rv2599</fullName>
    </recommendedName>
</protein>
<reference key="1">
    <citation type="journal article" date="1998" name="Nature">
        <title>Deciphering the biology of Mycobacterium tuberculosis from the complete genome sequence.</title>
        <authorList>
            <person name="Cole S.T."/>
            <person name="Brosch R."/>
            <person name="Parkhill J."/>
            <person name="Garnier T."/>
            <person name="Churcher C.M."/>
            <person name="Harris D.E."/>
            <person name="Gordon S.V."/>
            <person name="Eiglmeier K."/>
            <person name="Gas S."/>
            <person name="Barry C.E. III"/>
            <person name="Tekaia F."/>
            <person name="Badcock K."/>
            <person name="Basham D."/>
            <person name="Brown D."/>
            <person name="Chillingworth T."/>
            <person name="Connor R."/>
            <person name="Davies R.M."/>
            <person name="Devlin K."/>
            <person name="Feltwell T."/>
            <person name="Gentles S."/>
            <person name="Hamlin N."/>
            <person name="Holroyd S."/>
            <person name="Hornsby T."/>
            <person name="Jagels K."/>
            <person name="Krogh A."/>
            <person name="McLean J."/>
            <person name="Moule S."/>
            <person name="Murphy L.D."/>
            <person name="Oliver S."/>
            <person name="Osborne J."/>
            <person name="Quail M.A."/>
            <person name="Rajandream M.A."/>
            <person name="Rogers J."/>
            <person name="Rutter S."/>
            <person name="Seeger K."/>
            <person name="Skelton S."/>
            <person name="Squares S."/>
            <person name="Squares R."/>
            <person name="Sulston J.E."/>
            <person name="Taylor K."/>
            <person name="Whitehead S."/>
            <person name="Barrell B.G."/>
        </authorList>
    </citation>
    <scope>NUCLEOTIDE SEQUENCE [LARGE SCALE GENOMIC DNA]</scope>
    <source>
        <strain>ATCC 25618 / H37Rv</strain>
    </source>
</reference>
<reference key="2">
    <citation type="journal article" date="2011" name="Mol. Cell. Proteomics">
        <title>Proteogenomic analysis of Mycobacterium tuberculosis by high resolution mass spectrometry.</title>
        <authorList>
            <person name="Kelkar D.S."/>
            <person name="Kumar D."/>
            <person name="Kumar P."/>
            <person name="Balakrishnan L."/>
            <person name="Muthusamy B."/>
            <person name="Yadav A.K."/>
            <person name="Shrivastava P."/>
            <person name="Marimuthu A."/>
            <person name="Anand S."/>
            <person name="Sundaram H."/>
            <person name="Kingsbury R."/>
            <person name="Harsha H.C."/>
            <person name="Nair B."/>
            <person name="Prasad T.S."/>
            <person name="Chauhan D.S."/>
            <person name="Katoch K."/>
            <person name="Katoch V.M."/>
            <person name="Kumar P."/>
            <person name="Chaerkady R."/>
            <person name="Ramachandran S."/>
            <person name="Dash D."/>
            <person name="Pandey A."/>
        </authorList>
    </citation>
    <scope>IDENTIFICATION BY MASS SPECTROMETRY [LARGE SCALE ANALYSIS]</scope>
    <source>
        <strain>ATCC 25618 / H37Rv</strain>
    </source>
</reference>
<evidence type="ECO:0000255" key="1"/>
<evidence type="ECO:0000305" key="2"/>
<accession>P9WL69</accession>
<accession>L0TA52</accession>
<accession>Q50622</accession>